<dbReference type="EC" id="2.5.1.19" evidence="1"/>
<dbReference type="EMBL" id="CP000394">
    <property type="protein sequence ID" value="ABI62923.1"/>
    <property type="molecule type" value="Genomic_DNA"/>
</dbReference>
<dbReference type="RefSeq" id="WP_011632725.1">
    <property type="nucleotide sequence ID" value="NC_008343.2"/>
</dbReference>
<dbReference type="SMR" id="Q0BQH9"/>
<dbReference type="STRING" id="391165.GbCGDNIH1_2025"/>
<dbReference type="KEGG" id="gbe:GbCGDNIH1_2025"/>
<dbReference type="eggNOG" id="COG0128">
    <property type="taxonomic scope" value="Bacteria"/>
</dbReference>
<dbReference type="HOGENOM" id="CLU_024321_0_1_5"/>
<dbReference type="OrthoDB" id="9809920at2"/>
<dbReference type="UniPathway" id="UPA00053">
    <property type="reaction ID" value="UER00089"/>
</dbReference>
<dbReference type="Proteomes" id="UP000001963">
    <property type="component" value="Chromosome"/>
</dbReference>
<dbReference type="GO" id="GO:0005737">
    <property type="term" value="C:cytoplasm"/>
    <property type="evidence" value="ECO:0007669"/>
    <property type="project" value="UniProtKB-SubCell"/>
</dbReference>
<dbReference type="GO" id="GO:0003866">
    <property type="term" value="F:3-phosphoshikimate 1-carboxyvinyltransferase activity"/>
    <property type="evidence" value="ECO:0007669"/>
    <property type="project" value="UniProtKB-UniRule"/>
</dbReference>
<dbReference type="GO" id="GO:0008652">
    <property type="term" value="P:amino acid biosynthetic process"/>
    <property type="evidence" value="ECO:0007669"/>
    <property type="project" value="UniProtKB-KW"/>
</dbReference>
<dbReference type="GO" id="GO:0009073">
    <property type="term" value="P:aromatic amino acid family biosynthetic process"/>
    <property type="evidence" value="ECO:0007669"/>
    <property type="project" value="UniProtKB-KW"/>
</dbReference>
<dbReference type="GO" id="GO:0009423">
    <property type="term" value="P:chorismate biosynthetic process"/>
    <property type="evidence" value="ECO:0007669"/>
    <property type="project" value="UniProtKB-UniRule"/>
</dbReference>
<dbReference type="CDD" id="cd01556">
    <property type="entry name" value="EPSP_synthase"/>
    <property type="match status" value="1"/>
</dbReference>
<dbReference type="FunFam" id="3.65.10.10:FF:000005">
    <property type="entry name" value="3-phosphoshikimate 1-carboxyvinyltransferase"/>
    <property type="match status" value="1"/>
</dbReference>
<dbReference type="Gene3D" id="3.65.10.10">
    <property type="entry name" value="Enolpyruvate transferase domain"/>
    <property type="match status" value="2"/>
</dbReference>
<dbReference type="HAMAP" id="MF_00210">
    <property type="entry name" value="EPSP_synth"/>
    <property type="match status" value="1"/>
</dbReference>
<dbReference type="InterPro" id="IPR001986">
    <property type="entry name" value="Enolpyruvate_Tfrase_dom"/>
</dbReference>
<dbReference type="InterPro" id="IPR036968">
    <property type="entry name" value="Enolpyruvate_Tfrase_sf"/>
</dbReference>
<dbReference type="InterPro" id="IPR006264">
    <property type="entry name" value="EPSP_synthase"/>
</dbReference>
<dbReference type="InterPro" id="IPR023193">
    <property type="entry name" value="EPSP_synthase_CS"/>
</dbReference>
<dbReference type="InterPro" id="IPR013792">
    <property type="entry name" value="RNA3'P_cycl/enolpyr_Trfase_a/b"/>
</dbReference>
<dbReference type="NCBIfam" id="TIGR01356">
    <property type="entry name" value="aroA"/>
    <property type="match status" value="1"/>
</dbReference>
<dbReference type="PANTHER" id="PTHR21090">
    <property type="entry name" value="AROM/DEHYDROQUINATE SYNTHASE"/>
    <property type="match status" value="1"/>
</dbReference>
<dbReference type="PANTHER" id="PTHR21090:SF5">
    <property type="entry name" value="PENTAFUNCTIONAL AROM POLYPEPTIDE"/>
    <property type="match status" value="1"/>
</dbReference>
<dbReference type="Pfam" id="PF00275">
    <property type="entry name" value="EPSP_synthase"/>
    <property type="match status" value="1"/>
</dbReference>
<dbReference type="PIRSF" id="PIRSF000505">
    <property type="entry name" value="EPSPS"/>
    <property type="match status" value="1"/>
</dbReference>
<dbReference type="SUPFAM" id="SSF55205">
    <property type="entry name" value="EPT/RTPC-like"/>
    <property type="match status" value="1"/>
</dbReference>
<dbReference type="PROSITE" id="PS00104">
    <property type="entry name" value="EPSP_SYNTHASE_1"/>
    <property type="match status" value="1"/>
</dbReference>
<dbReference type="PROSITE" id="PS00885">
    <property type="entry name" value="EPSP_SYNTHASE_2"/>
    <property type="match status" value="1"/>
</dbReference>
<accession>Q0BQH9</accession>
<organism>
    <name type="scientific">Granulibacter bethesdensis (strain ATCC BAA-1260 / CGDNIH1)</name>
    <dbReference type="NCBI Taxonomy" id="391165"/>
    <lineage>
        <taxon>Bacteria</taxon>
        <taxon>Pseudomonadati</taxon>
        <taxon>Pseudomonadota</taxon>
        <taxon>Alphaproteobacteria</taxon>
        <taxon>Acetobacterales</taxon>
        <taxon>Acetobacteraceae</taxon>
        <taxon>Granulibacter</taxon>
    </lineage>
</organism>
<keyword id="KW-0028">Amino-acid biosynthesis</keyword>
<keyword id="KW-0057">Aromatic amino acid biosynthesis</keyword>
<keyword id="KW-0963">Cytoplasm</keyword>
<keyword id="KW-1185">Reference proteome</keyword>
<keyword id="KW-0808">Transferase</keyword>
<name>AROA_GRABC</name>
<reference key="1">
    <citation type="journal article" date="2007" name="J. Bacteriol.">
        <title>Genome sequence analysis of the emerging human pathogenic acetic acid bacterium Granulibacter bethesdensis.</title>
        <authorList>
            <person name="Greenberg D.E."/>
            <person name="Porcella S.F."/>
            <person name="Zelazny A.M."/>
            <person name="Virtaneva K."/>
            <person name="Sturdevant D.E."/>
            <person name="Kupko J.J. III"/>
            <person name="Barbian K.D."/>
            <person name="Babar A."/>
            <person name="Dorward D.W."/>
            <person name="Holland S.M."/>
        </authorList>
    </citation>
    <scope>NUCLEOTIDE SEQUENCE [LARGE SCALE GENOMIC DNA]</scope>
    <source>
        <strain>ATCC BAA-1260 / CGDNIH1</strain>
    </source>
</reference>
<comment type="function">
    <text evidence="1">Catalyzes the transfer of the enolpyruvyl moiety of phosphoenolpyruvate (PEP) to the 5-hydroxyl of shikimate-3-phosphate (S3P) to produce enolpyruvyl shikimate-3-phosphate and inorganic phosphate.</text>
</comment>
<comment type="catalytic activity">
    <reaction evidence="1">
        <text>3-phosphoshikimate + phosphoenolpyruvate = 5-O-(1-carboxyvinyl)-3-phosphoshikimate + phosphate</text>
        <dbReference type="Rhea" id="RHEA:21256"/>
        <dbReference type="ChEBI" id="CHEBI:43474"/>
        <dbReference type="ChEBI" id="CHEBI:57701"/>
        <dbReference type="ChEBI" id="CHEBI:58702"/>
        <dbReference type="ChEBI" id="CHEBI:145989"/>
        <dbReference type="EC" id="2.5.1.19"/>
    </reaction>
    <physiologicalReaction direction="left-to-right" evidence="1">
        <dbReference type="Rhea" id="RHEA:21257"/>
    </physiologicalReaction>
</comment>
<comment type="pathway">
    <text evidence="1">Metabolic intermediate biosynthesis; chorismate biosynthesis; chorismate from D-erythrose 4-phosphate and phosphoenolpyruvate: step 6/7.</text>
</comment>
<comment type="subunit">
    <text evidence="1">Monomer.</text>
</comment>
<comment type="subcellular location">
    <subcellularLocation>
        <location evidence="1">Cytoplasm</location>
    </subcellularLocation>
</comment>
<comment type="similarity">
    <text evidence="1">Belongs to the EPSP synthase family.</text>
</comment>
<gene>
    <name evidence="1" type="primary">aroA</name>
    <name type="ordered locus">GbCGDNIH1_2025</name>
</gene>
<sequence>MSENHSEGASRPVISRRPAAGLRADHPVHVPGDKSISHRALMIGALAVGETRISGLLEGEDVLRTAAAMRALGAEVVRDAPGSWRVAGRGIGGLTEPADVLDMGNSGTAARLLTGVLASHDLFAVMTGDASLRKRPMRRVTDPLAACGAGFHTRSGGRLPMAVRGTGEALPLHYRLPVASAQVKSAILLAGLNARGETVVEEPHATRDHSENMLRHFGATVQVEPTGDGAGRIVRLQGQPELRAADIVVPADPSSAAFPLVAALLVPGSEITLAGVGLNPLRTGLFDTLVEMGAALTIANRRIEGGEPVGDITVRASTLHGVEVPPERAPSMIDEFPILSVAAAVASGTTRMRGLAELRVKESDRLAATAALLSVNGVQVEIEGDDLIVIGCGGPPPGGGLVTTYMDHRLAMSALVLGLTTQAPVTADDAAFIDTSFPGFATLMTGLGADFSCA</sequence>
<feature type="chain" id="PRO_0000325349" description="3-phosphoshikimate 1-carboxyvinyltransferase">
    <location>
        <begin position="1"/>
        <end position="454"/>
    </location>
</feature>
<feature type="region of interest" description="Disordered" evidence="2">
    <location>
        <begin position="1"/>
        <end position="31"/>
    </location>
</feature>
<feature type="active site" description="Proton acceptor" evidence="1">
    <location>
        <position position="334"/>
    </location>
</feature>
<feature type="binding site" evidence="1">
    <location>
        <position position="34"/>
    </location>
    <ligand>
        <name>3-phosphoshikimate</name>
        <dbReference type="ChEBI" id="CHEBI:145989"/>
    </ligand>
</feature>
<feature type="binding site" evidence="1">
    <location>
        <position position="34"/>
    </location>
    <ligand>
        <name>phosphoenolpyruvate</name>
        <dbReference type="ChEBI" id="CHEBI:58702"/>
    </ligand>
</feature>
<feature type="binding site" evidence="1">
    <location>
        <position position="35"/>
    </location>
    <ligand>
        <name>3-phosphoshikimate</name>
        <dbReference type="ChEBI" id="CHEBI:145989"/>
    </ligand>
</feature>
<feature type="binding site" evidence="1">
    <location>
        <position position="39"/>
    </location>
    <ligand>
        <name>3-phosphoshikimate</name>
        <dbReference type="ChEBI" id="CHEBI:145989"/>
    </ligand>
</feature>
<feature type="binding site" evidence="1">
    <location>
        <position position="107"/>
    </location>
    <ligand>
        <name>phosphoenolpyruvate</name>
        <dbReference type="ChEBI" id="CHEBI:58702"/>
    </ligand>
</feature>
<feature type="binding site" evidence="1">
    <location>
        <position position="135"/>
    </location>
    <ligand>
        <name>phosphoenolpyruvate</name>
        <dbReference type="ChEBI" id="CHEBI:58702"/>
    </ligand>
</feature>
<feature type="binding site" evidence="1">
    <location>
        <position position="180"/>
    </location>
    <ligand>
        <name>3-phosphoshikimate</name>
        <dbReference type="ChEBI" id="CHEBI:145989"/>
    </ligand>
</feature>
<feature type="binding site" evidence="1">
    <location>
        <position position="182"/>
    </location>
    <ligand>
        <name>3-phosphoshikimate</name>
        <dbReference type="ChEBI" id="CHEBI:145989"/>
    </ligand>
</feature>
<feature type="binding site" evidence="1">
    <location>
        <position position="182"/>
    </location>
    <ligand>
        <name>phosphoenolpyruvate</name>
        <dbReference type="ChEBI" id="CHEBI:58702"/>
    </ligand>
</feature>
<feature type="binding site" evidence="1">
    <location>
        <position position="334"/>
    </location>
    <ligand>
        <name>3-phosphoshikimate</name>
        <dbReference type="ChEBI" id="CHEBI:145989"/>
    </ligand>
</feature>
<feature type="binding site" evidence="1">
    <location>
        <position position="361"/>
    </location>
    <ligand>
        <name>3-phosphoshikimate</name>
        <dbReference type="ChEBI" id="CHEBI:145989"/>
    </ligand>
</feature>
<feature type="binding site" evidence="1">
    <location>
        <position position="365"/>
    </location>
    <ligand>
        <name>phosphoenolpyruvate</name>
        <dbReference type="ChEBI" id="CHEBI:58702"/>
    </ligand>
</feature>
<feature type="binding site" evidence="1">
    <location>
        <position position="409"/>
    </location>
    <ligand>
        <name>phosphoenolpyruvate</name>
        <dbReference type="ChEBI" id="CHEBI:58702"/>
    </ligand>
</feature>
<proteinExistence type="inferred from homology"/>
<protein>
    <recommendedName>
        <fullName evidence="1">3-phosphoshikimate 1-carboxyvinyltransferase</fullName>
        <ecNumber evidence="1">2.5.1.19</ecNumber>
    </recommendedName>
    <alternativeName>
        <fullName evidence="1">5-enolpyruvylshikimate-3-phosphate synthase</fullName>
        <shortName evidence="1">EPSP synthase</shortName>
        <shortName evidence="1">EPSPS</shortName>
    </alternativeName>
</protein>
<evidence type="ECO:0000255" key="1">
    <source>
        <dbReference type="HAMAP-Rule" id="MF_00210"/>
    </source>
</evidence>
<evidence type="ECO:0000256" key="2">
    <source>
        <dbReference type="SAM" id="MobiDB-lite"/>
    </source>
</evidence>